<accession>Q99KD5</accession>
<accession>Q3TKV6</accession>
<accession>Q8BFT3</accession>
<accession>Q8C157</accession>
<name>UN45A_MOUSE</name>
<comment type="function">
    <text evidence="1 4 5 6">May act as co-chaperone for HSP90 (Potential). Prevents the stimulation of HSP90AB1 ATPase activity by AHSA1. Positive factor in promoting PGR function in the cell (By similarity). May be necessary for proper folding of myosin (Potential). Necessary for normal cell proliferation. Necessary for normal myotube formation and myosin accumulation during muscle cell development. May play a role in erythropoiesis in stroma cells in the spleen.</text>
</comment>
<comment type="subunit">
    <text evidence="1">Interacts with PGR isoforms A and B as well as with NR3C1 in the absence of ligand, and with HSP90AB1. Binding to HSP90AB1 involves 2 UNC45A monomers per HSP90AB1 dimer (By similarity).</text>
</comment>
<comment type="subcellular location">
    <subcellularLocation>
        <location evidence="1">Cytoplasm</location>
    </subcellularLocation>
    <subcellularLocation>
        <location evidence="1">Cytoplasm</location>
        <location evidence="1">Perinuclear region</location>
    </subcellularLocation>
    <subcellularLocation>
        <location evidence="1">Nucleus</location>
    </subcellularLocation>
    <text evidence="1">Predominant in the perinuclear region. Little protein in the nucleus (By similarity).</text>
</comment>
<comment type="tissue specificity">
    <text evidence="4 5">Detected in spleen, bone marrow, lung and ovary, and at lower levels in testis, kidney, heart and brain (at protein level). Ubiquitous. Detected in uterus, large intestine, kidney, spleen, lung, brain, liver and ovary.</text>
</comment>
<gene>
    <name type="primary">Unc45a</name>
    <name type="synonym">Smap1</name>
</gene>
<reference key="1">
    <citation type="journal article" date="2005" name="Science">
        <title>The transcriptional landscape of the mammalian genome.</title>
        <authorList>
            <person name="Carninci P."/>
            <person name="Kasukawa T."/>
            <person name="Katayama S."/>
            <person name="Gough J."/>
            <person name="Frith M.C."/>
            <person name="Maeda N."/>
            <person name="Oyama R."/>
            <person name="Ravasi T."/>
            <person name="Lenhard B."/>
            <person name="Wells C."/>
            <person name="Kodzius R."/>
            <person name="Shimokawa K."/>
            <person name="Bajic V.B."/>
            <person name="Brenner S.E."/>
            <person name="Batalov S."/>
            <person name="Forrest A.R."/>
            <person name="Zavolan M."/>
            <person name="Davis M.J."/>
            <person name="Wilming L.G."/>
            <person name="Aidinis V."/>
            <person name="Allen J.E."/>
            <person name="Ambesi-Impiombato A."/>
            <person name="Apweiler R."/>
            <person name="Aturaliya R.N."/>
            <person name="Bailey T.L."/>
            <person name="Bansal M."/>
            <person name="Baxter L."/>
            <person name="Beisel K.W."/>
            <person name="Bersano T."/>
            <person name="Bono H."/>
            <person name="Chalk A.M."/>
            <person name="Chiu K.P."/>
            <person name="Choudhary V."/>
            <person name="Christoffels A."/>
            <person name="Clutterbuck D.R."/>
            <person name="Crowe M.L."/>
            <person name="Dalla E."/>
            <person name="Dalrymple B.P."/>
            <person name="de Bono B."/>
            <person name="Della Gatta G."/>
            <person name="di Bernardo D."/>
            <person name="Down T."/>
            <person name="Engstrom P."/>
            <person name="Fagiolini M."/>
            <person name="Faulkner G."/>
            <person name="Fletcher C.F."/>
            <person name="Fukushima T."/>
            <person name="Furuno M."/>
            <person name="Futaki S."/>
            <person name="Gariboldi M."/>
            <person name="Georgii-Hemming P."/>
            <person name="Gingeras T.R."/>
            <person name="Gojobori T."/>
            <person name="Green R.E."/>
            <person name="Gustincich S."/>
            <person name="Harbers M."/>
            <person name="Hayashi Y."/>
            <person name="Hensch T.K."/>
            <person name="Hirokawa N."/>
            <person name="Hill D."/>
            <person name="Huminiecki L."/>
            <person name="Iacono M."/>
            <person name="Ikeo K."/>
            <person name="Iwama A."/>
            <person name="Ishikawa T."/>
            <person name="Jakt M."/>
            <person name="Kanapin A."/>
            <person name="Katoh M."/>
            <person name="Kawasawa Y."/>
            <person name="Kelso J."/>
            <person name="Kitamura H."/>
            <person name="Kitano H."/>
            <person name="Kollias G."/>
            <person name="Krishnan S.P."/>
            <person name="Kruger A."/>
            <person name="Kummerfeld S.K."/>
            <person name="Kurochkin I.V."/>
            <person name="Lareau L.F."/>
            <person name="Lazarevic D."/>
            <person name="Lipovich L."/>
            <person name="Liu J."/>
            <person name="Liuni S."/>
            <person name="McWilliam S."/>
            <person name="Madan Babu M."/>
            <person name="Madera M."/>
            <person name="Marchionni L."/>
            <person name="Matsuda H."/>
            <person name="Matsuzawa S."/>
            <person name="Miki H."/>
            <person name="Mignone F."/>
            <person name="Miyake S."/>
            <person name="Morris K."/>
            <person name="Mottagui-Tabar S."/>
            <person name="Mulder N."/>
            <person name="Nakano N."/>
            <person name="Nakauchi H."/>
            <person name="Ng P."/>
            <person name="Nilsson R."/>
            <person name="Nishiguchi S."/>
            <person name="Nishikawa S."/>
            <person name="Nori F."/>
            <person name="Ohara O."/>
            <person name="Okazaki Y."/>
            <person name="Orlando V."/>
            <person name="Pang K.C."/>
            <person name="Pavan W.J."/>
            <person name="Pavesi G."/>
            <person name="Pesole G."/>
            <person name="Petrovsky N."/>
            <person name="Piazza S."/>
            <person name="Reed J."/>
            <person name="Reid J.F."/>
            <person name="Ring B.Z."/>
            <person name="Ringwald M."/>
            <person name="Rost B."/>
            <person name="Ruan Y."/>
            <person name="Salzberg S.L."/>
            <person name="Sandelin A."/>
            <person name="Schneider C."/>
            <person name="Schoenbach C."/>
            <person name="Sekiguchi K."/>
            <person name="Semple C.A."/>
            <person name="Seno S."/>
            <person name="Sessa L."/>
            <person name="Sheng Y."/>
            <person name="Shibata Y."/>
            <person name="Shimada H."/>
            <person name="Shimada K."/>
            <person name="Silva D."/>
            <person name="Sinclair B."/>
            <person name="Sperling S."/>
            <person name="Stupka E."/>
            <person name="Sugiura K."/>
            <person name="Sultana R."/>
            <person name="Takenaka Y."/>
            <person name="Taki K."/>
            <person name="Tammoja K."/>
            <person name="Tan S.L."/>
            <person name="Tang S."/>
            <person name="Taylor M.S."/>
            <person name="Tegner J."/>
            <person name="Teichmann S.A."/>
            <person name="Ueda H.R."/>
            <person name="van Nimwegen E."/>
            <person name="Verardo R."/>
            <person name="Wei C.L."/>
            <person name="Yagi K."/>
            <person name="Yamanishi H."/>
            <person name="Zabarovsky E."/>
            <person name="Zhu S."/>
            <person name="Zimmer A."/>
            <person name="Hide W."/>
            <person name="Bult C."/>
            <person name="Grimmond S.M."/>
            <person name="Teasdale R.D."/>
            <person name="Liu E.T."/>
            <person name="Brusic V."/>
            <person name="Quackenbush J."/>
            <person name="Wahlestedt C."/>
            <person name="Mattick J.S."/>
            <person name="Hume D.A."/>
            <person name="Kai C."/>
            <person name="Sasaki D."/>
            <person name="Tomaru Y."/>
            <person name="Fukuda S."/>
            <person name="Kanamori-Katayama M."/>
            <person name="Suzuki M."/>
            <person name="Aoki J."/>
            <person name="Arakawa T."/>
            <person name="Iida J."/>
            <person name="Imamura K."/>
            <person name="Itoh M."/>
            <person name="Kato T."/>
            <person name="Kawaji H."/>
            <person name="Kawagashira N."/>
            <person name="Kawashima T."/>
            <person name="Kojima M."/>
            <person name="Kondo S."/>
            <person name="Konno H."/>
            <person name="Nakano K."/>
            <person name="Ninomiya N."/>
            <person name="Nishio T."/>
            <person name="Okada M."/>
            <person name="Plessy C."/>
            <person name="Shibata K."/>
            <person name="Shiraki T."/>
            <person name="Suzuki S."/>
            <person name="Tagami M."/>
            <person name="Waki K."/>
            <person name="Watahiki A."/>
            <person name="Okamura-Oho Y."/>
            <person name="Suzuki H."/>
            <person name="Kawai J."/>
            <person name="Hayashizaki Y."/>
        </authorList>
    </citation>
    <scope>NUCLEOTIDE SEQUENCE [LARGE SCALE MRNA]</scope>
    <source>
        <strain>C57BL/6J</strain>
        <tissue>Blastocyst</tissue>
        <tissue>Cerebellum</tissue>
        <tissue>Skin</tissue>
    </source>
</reference>
<reference key="2">
    <citation type="journal article" date="2004" name="Genome Res.">
        <title>The status, quality, and expansion of the NIH full-length cDNA project: the Mammalian Gene Collection (MGC).</title>
        <authorList>
            <consortium name="The MGC Project Team"/>
        </authorList>
    </citation>
    <scope>NUCLEOTIDE SEQUENCE [LARGE SCALE MRNA]</scope>
    <source>
        <strain>FVB/N</strain>
        <tissue>Mammary tumor</tissue>
    </source>
</reference>
<reference key="3">
    <citation type="journal article" date="1997" name="Leukemia">
        <title>A new type-II membrane protein in erythropoietic organs enhances erythropoiesis.</title>
        <authorList>
            <person name="Yanai N."/>
            <person name="Sato Y."/>
            <person name="Obinata M."/>
        </authorList>
    </citation>
    <scope>FUNCTION</scope>
    <scope>TISSUE SPECIFICITY</scope>
</reference>
<reference key="4">
    <citation type="journal article" date="2002" name="J. Cell Sci.">
        <title>Two mammalian UNC-45 isoforms are related to distinct cytoskeletal and muscle-specific functions.</title>
        <authorList>
            <person name="Price M.G."/>
            <person name="Landsverk M.L."/>
            <person name="Barral J.M."/>
            <person name="Epstein H.F."/>
        </authorList>
    </citation>
    <scope>FUNCTION</scope>
    <scope>TISSUE SPECIFICITY</scope>
</reference>
<reference key="5">
    <citation type="journal article" date="2010" name="Cell">
        <title>A tissue-specific atlas of mouse protein phosphorylation and expression.</title>
        <authorList>
            <person name="Huttlin E.L."/>
            <person name="Jedrychowski M.P."/>
            <person name="Elias J.E."/>
            <person name="Goswami T."/>
            <person name="Rad R."/>
            <person name="Beausoleil S.A."/>
            <person name="Villen J."/>
            <person name="Haas W."/>
            <person name="Sowa M.E."/>
            <person name="Gygi S.P."/>
        </authorList>
    </citation>
    <scope>IDENTIFICATION BY MASS SPECTROMETRY [LARGE SCALE ANALYSIS]</scope>
    <source>
        <tissue>Brain</tissue>
        <tissue>Brown adipose tissue</tissue>
        <tissue>Kidney</tissue>
        <tissue>Liver</tissue>
        <tissue>Lung</tissue>
        <tissue>Pancreas</tissue>
        <tissue>Spleen</tissue>
        <tissue>Testis</tissue>
    </source>
</reference>
<feature type="chain" id="PRO_0000249889" description="Protein unc-45 homolog A">
    <location>
        <begin position="1"/>
        <end position="944"/>
    </location>
</feature>
<feature type="repeat" description="TPR 1">
    <location>
        <begin position="21"/>
        <end position="54"/>
    </location>
</feature>
<feature type="repeat" description="TPR 2">
    <location>
        <begin position="58"/>
        <end position="91"/>
    </location>
</feature>
<feature type="repeat" description="TPR 3">
    <location>
        <begin position="92"/>
        <end position="125"/>
    </location>
</feature>
<feature type="region of interest" description="Disordered" evidence="3">
    <location>
        <begin position="1"/>
        <end position="25"/>
    </location>
</feature>
<feature type="modified residue" description="N6-acetyllysine" evidence="2">
    <location>
        <position position="70"/>
    </location>
</feature>
<feature type="modified residue" description="N6-acetyllysine" evidence="2">
    <location>
        <position position="483"/>
    </location>
</feature>
<feature type="sequence conflict" description="In Ref. 1; BAC26192." evidence="6" ref="1">
    <original>E</original>
    <variation>G</variation>
    <location>
        <position position="86"/>
    </location>
</feature>
<feature type="sequence conflict" description="In Ref. 2; AAH04717." evidence="6" ref="2">
    <original>N</original>
    <variation>S</variation>
    <location>
        <position position="401"/>
    </location>
</feature>
<feature type="sequence conflict" description="In Ref. 1; BAC33017/BAC33070." evidence="6" ref="1">
    <original>D</original>
    <variation>G</variation>
    <location>
        <position position="492"/>
    </location>
</feature>
<feature type="sequence conflict" description="In Ref. 2; AAH04717." evidence="6" ref="2">
    <original>A</original>
    <variation>T</variation>
    <location>
        <position position="851"/>
    </location>
</feature>
<keyword id="KW-0007">Acetylation</keyword>
<keyword id="KW-0143">Chaperone</keyword>
<keyword id="KW-0963">Cytoplasm</keyword>
<keyword id="KW-0217">Developmental protein</keyword>
<keyword id="KW-0221">Differentiation</keyword>
<keyword id="KW-0517">Myogenesis</keyword>
<keyword id="KW-0539">Nucleus</keyword>
<keyword id="KW-1185">Reference proteome</keyword>
<keyword id="KW-0677">Repeat</keyword>
<keyword id="KW-0802">TPR repeat</keyword>
<protein>
    <recommendedName>
        <fullName>Protein unc-45 homolog A</fullName>
        <shortName>Unc-45A</shortName>
    </recommendedName>
    <alternativeName>
        <fullName>Stromal membrane-associated protein 1</fullName>
        <shortName>SMAP-1</shortName>
    </alternativeName>
</protein>
<evidence type="ECO:0000250" key="1"/>
<evidence type="ECO:0000250" key="2">
    <source>
        <dbReference type="UniProtKB" id="Q9H3U1"/>
    </source>
</evidence>
<evidence type="ECO:0000256" key="3">
    <source>
        <dbReference type="SAM" id="MobiDB-lite"/>
    </source>
</evidence>
<evidence type="ECO:0000269" key="4">
    <source>
    </source>
</evidence>
<evidence type="ECO:0000269" key="5">
    <source>
    </source>
</evidence>
<evidence type="ECO:0000305" key="6"/>
<sequence>MTVSGPETPEPRPSDPGASSAEQLRKEGNELFKCGDYEGALTAYTQALSLGATPQDQAILHRNRAACHLKLEDYSKAESEASKAIEKDGGDVKALYRRSQALEKLGRLDQAVLDLKRCVSLEPKNKVFQESLRNIGGQIQEKVRYMSSTDAKVEQMFQILLDPKEKGTEKKQKASQNLVVLAREDAGAEKIFRSNGVQLLQRLLDTEETDLMLAALRTLVGICSEHQSRTVATLSVLGTRRVVSILGVENQAVSLAACHLLQVIFDALKEGVKKGFRGKEGAIIVDPARELKVLINSLLELLTEVGVSGQGRDNALTLLIKMVPRKSPKDPNNSLTLWVIDQGLKKILEVGGSLQDAAGELTVTANSRMSASILLSKLFDDLKCDAERENFHRLCENYIRNWFEGHGLAGKLRAIQTVSCLLQGPCDAGNRALELSGVMESVIALCASEREEEQLVAVEALIHAAGKAKRASFITANGVSLLKDLYKGSERDSIRIRALVGLCKLGSAGGTDFSMKQFAEGSTLKLAKQCRKWLCNDQIDAGTRRWAVEGLAYLTFDADVKEEFVEDEAALKALFQLSRSEERSVLFAVGSALVNCTNSYDYEEPDPKMVELAKYAKQHVPEQHPKDKPSFVRARVKKLLAAGVVSAMTCMVKTESPVLTNSCRELLSRVFLALVEEVEDRGTVVAQGGGKALLPLALEGTDVGQTKAAQALAKLTITSNPEMTFPGERIYEVVRPLVSLLHLSCSGLQNFEALMALTNLAGISERLRQKILKEKAVPMIEGYMFEEHEMIRRAATECMCNLAMSKEVQDLFEAQGNDRLKLLVLYSGEDDELLRRAAAGGLAMLTSMRPALCSRIPQVTTHWLEILQALLLSPNQELQHRGTVVVLNMMQSSKEIAGTLMESEVLEILSVLAKGEESPVTRAAAACLEKAVEYRLIQPNQDGE</sequence>
<organism>
    <name type="scientific">Mus musculus</name>
    <name type="common">Mouse</name>
    <dbReference type="NCBI Taxonomy" id="10090"/>
    <lineage>
        <taxon>Eukaryota</taxon>
        <taxon>Metazoa</taxon>
        <taxon>Chordata</taxon>
        <taxon>Craniata</taxon>
        <taxon>Vertebrata</taxon>
        <taxon>Euteleostomi</taxon>
        <taxon>Mammalia</taxon>
        <taxon>Eutheria</taxon>
        <taxon>Euarchontoglires</taxon>
        <taxon>Glires</taxon>
        <taxon>Rodentia</taxon>
        <taxon>Myomorpha</taxon>
        <taxon>Muroidea</taxon>
        <taxon>Muridae</taxon>
        <taxon>Murinae</taxon>
        <taxon>Mus</taxon>
        <taxon>Mus</taxon>
    </lineage>
</organism>
<dbReference type="EMBL" id="AK028912">
    <property type="protein sequence ID" value="BAC26192.1"/>
    <property type="molecule type" value="mRNA"/>
</dbReference>
<dbReference type="EMBL" id="AK047292">
    <property type="protein sequence ID" value="BAC33017.1"/>
    <property type="molecule type" value="mRNA"/>
</dbReference>
<dbReference type="EMBL" id="AK047476">
    <property type="protein sequence ID" value="BAC33070.1"/>
    <property type="molecule type" value="mRNA"/>
</dbReference>
<dbReference type="EMBL" id="AK166809">
    <property type="protein sequence ID" value="BAE39037.1"/>
    <property type="molecule type" value="mRNA"/>
</dbReference>
<dbReference type="EMBL" id="BC004717">
    <property type="protein sequence ID" value="AAH04717.1"/>
    <property type="molecule type" value="mRNA"/>
</dbReference>
<dbReference type="CCDS" id="CCDS21395.1"/>
<dbReference type="RefSeq" id="NP_598713.2">
    <property type="nucleotide sequence ID" value="NM_133952.2"/>
</dbReference>
<dbReference type="RefSeq" id="XP_011249076.1">
    <property type="nucleotide sequence ID" value="XM_011250774.1"/>
</dbReference>
<dbReference type="SMR" id="Q99KD5"/>
<dbReference type="BioGRID" id="221742">
    <property type="interactions" value="5"/>
</dbReference>
<dbReference type="FunCoup" id="Q99KD5">
    <property type="interactions" value="4330"/>
</dbReference>
<dbReference type="STRING" id="10090.ENSMUSP00000032748"/>
<dbReference type="iPTMnet" id="Q99KD5"/>
<dbReference type="PhosphoSitePlus" id="Q99KD5"/>
<dbReference type="PaxDb" id="10090-ENSMUSP00000102991"/>
<dbReference type="PeptideAtlas" id="Q99KD5"/>
<dbReference type="ProteomicsDB" id="300084"/>
<dbReference type="Pumba" id="Q99KD5"/>
<dbReference type="Antibodypedia" id="28924">
    <property type="antibodies" value="121 antibodies from 24 providers"/>
</dbReference>
<dbReference type="DNASU" id="101869"/>
<dbReference type="Ensembl" id="ENSMUST00000032748.15">
    <property type="protein sequence ID" value="ENSMUSP00000032748.9"/>
    <property type="gene ID" value="ENSMUSG00000030533.17"/>
</dbReference>
<dbReference type="GeneID" id="101869"/>
<dbReference type="KEGG" id="mmu:101869"/>
<dbReference type="UCSC" id="uc009iam.3">
    <property type="organism name" value="mouse"/>
</dbReference>
<dbReference type="AGR" id="MGI:2142246"/>
<dbReference type="CTD" id="55898"/>
<dbReference type="MGI" id="MGI:2142246">
    <property type="gene designation" value="Unc45a"/>
</dbReference>
<dbReference type="VEuPathDB" id="HostDB:ENSMUSG00000030533"/>
<dbReference type="eggNOG" id="KOG4151">
    <property type="taxonomic scope" value="Eukaryota"/>
</dbReference>
<dbReference type="GeneTree" id="ENSGT00940000159320"/>
<dbReference type="HOGENOM" id="CLU_007331_0_0_1"/>
<dbReference type="InParanoid" id="Q99KD5"/>
<dbReference type="OMA" id="LDQKHED"/>
<dbReference type="OrthoDB" id="41729at9989"/>
<dbReference type="PhylomeDB" id="Q99KD5"/>
<dbReference type="TreeFam" id="TF314096"/>
<dbReference type="BioGRID-ORCS" id="101869">
    <property type="hits" value="18 hits in 79 CRISPR screens"/>
</dbReference>
<dbReference type="ChiTaRS" id="Unc45a">
    <property type="organism name" value="mouse"/>
</dbReference>
<dbReference type="PRO" id="PR:Q99KD5"/>
<dbReference type="Proteomes" id="UP000000589">
    <property type="component" value="Chromosome 7"/>
</dbReference>
<dbReference type="RNAct" id="Q99KD5">
    <property type="molecule type" value="protein"/>
</dbReference>
<dbReference type="Bgee" id="ENSMUSG00000030533">
    <property type="expression patterns" value="Expressed in external carotid artery and 263 other cell types or tissues"/>
</dbReference>
<dbReference type="ExpressionAtlas" id="Q99KD5">
    <property type="expression patterns" value="baseline and differential"/>
</dbReference>
<dbReference type="GO" id="GO:0005829">
    <property type="term" value="C:cytosol"/>
    <property type="evidence" value="ECO:0007669"/>
    <property type="project" value="Ensembl"/>
</dbReference>
<dbReference type="GO" id="GO:0005794">
    <property type="term" value="C:Golgi apparatus"/>
    <property type="evidence" value="ECO:0007669"/>
    <property type="project" value="Ensembl"/>
</dbReference>
<dbReference type="GO" id="GO:0016607">
    <property type="term" value="C:nuclear speck"/>
    <property type="evidence" value="ECO:0007669"/>
    <property type="project" value="Ensembl"/>
</dbReference>
<dbReference type="GO" id="GO:0048471">
    <property type="term" value="C:perinuclear region of cytoplasm"/>
    <property type="evidence" value="ECO:0007669"/>
    <property type="project" value="UniProtKB-SubCell"/>
</dbReference>
<dbReference type="GO" id="GO:0051879">
    <property type="term" value="F:Hsp90 protein binding"/>
    <property type="evidence" value="ECO:0000314"/>
    <property type="project" value="MGI"/>
</dbReference>
<dbReference type="GO" id="GO:0030154">
    <property type="term" value="P:cell differentiation"/>
    <property type="evidence" value="ECO:0007669"/>
    <property type="project" value="UniProtKB-KW"/>
</dbReference>
<dbReference type="GO" id="GO:0061077">
    <property type="term" value="P:chaperone-mediated protein folding"/>
    <property type="evidence" value="ECO:0000314"/>
    <property type="project" value="MGI"/>
</dbReference>
<dbReference type="GO" id="GO:0007517">
    <property type="term" value="P:muscle organ development"/>
    <property type="evidence" value="ECO:0007669"/>
    <property type="project" value="UniProtKB-KW"/>
</dbReference>
<dbReference type="FunFam" id="1.25.10.10:FF:000087">
    <property type="entry name" value="Unc-45 myosin chaperone A"/>
    <property type="match status" value="1"/>
</dbReference>
<dbReference type="FunFam" id="1.25.10.10:FF:000043">
    <property type="entry name" value="Unc-45 myosin chaperone B"/>
    <property type="match status" value="1"/>
</dbReference>
<dbReference type="FunFam" id="1.25.40.10:FF:000025">
    <property type="entry name" value="Unc-45 myosin chaperone B"/>
    <property type="match status" value="1"/>
</dbReference>
<dbReference type="Gene3D" id="1.25.10.10">
    <property type="entry name" value="Leucine-rich Repeat Variant"/>
    <property type="match status" value="2"/>
</dbReference>
<dbReference type="Gene3D" id="1.25.40.10">
    <property type="entry name" value="Tetratricopeptide repeat domain"/>
    <property type="match status" value="1"/>
</dbReference>
<dbReference type="InterPro" id="IPR011989">
    <property type="entry name" value="ARM-like"/>
</dbReference>
<dbReference type="InterPro" id="IPR016024">
    <property type="entry name" value="ARM-type_fold"/>
</dbReference>
<dbReference type="InterPro" id="IPR011990">
    <property type="entry name" value="TPR-like_helical_dom_sf"/>
</dbReference>
<dbReference type="InterPro" id="IPR019734">
    <property type="entry name" value="TPR_rpt"/>
</dbReference>
<dbReference type="InterPro" id="IPR024660">
    <property type="entry name" value="UCS_central_dom"/>
</dbReference>
<dbReference type="PANTHER" id="PTHR45994">
    <property type="entry name" value="FI21225P1"/>
    <property type="match status" value="1"/>
</dbReference>
<dbReference type="PANTHER" id="PTHR45994:SF3">
    <property type="entry name" value="PROTEIN UNC-45 HOMOLOG A"/>
    <property type="match status" value="1"/>
</dbReference>
<dbReference type="Pfam" id="PF13432">
    <property type="entry name" value="TPR_16"/>
    <property type="match status" value="1"/>
</dbReference>
<dbReference type="Pfam" id="PF13181">
    <property type="entry name" value="TPR_8"/>
    <property type="match status" value="1"/>
</dbReference>
<dbReference type="Pfam" id="PF11701">
    <property type="entry name" value="UNC45-central"/>
    <property type="match status" value="1"/>
</dbReference>
<dbReference type="SMART" id="SM00028">
    <property type="entry name" value="TPR"/>
    <property type="match status" value="3"/>
</dbReference>
<dbReference type="SUPFAM" id="SSF48371">
    <property type="entry name" value="ARM repeat"/>
    <property type="match status" value="2"/>
</dbReference>
<dbReference type="SUPFAM" id="SSF48452">
    <property type="entry name" value="TPR-like"/>
    <property type="match status" value="1"/>
</dbReference>
<dbReference type="PROSITE" id="PS50005">
    <property type="entry name" value="TPR"/>
    <property type="match status" value="3"/>
</dbReference>
<dbReference type="PROSITE" id="PS50293">
    <property type="entry name" value="TPR_REGION"/>
    <property type="match status" value="1"/>
</dbReference>
<proteinExistence type="evidence at protein level"/>